<name>FL3H2_ORYSJ</name>
<proteinExistence type="evidence at protein level"/>
<comment type="function">
    <text evidence="3">Catalyzes the 3-beta-hydroxylation of 2S-flavanones to 2R,3R-dihydroflavonols which are intermediates in the biosynthesis of flavonols, anthocyanidins, catechins and proanthocyanidins in plants. Converts (2S)-eriodictyol to (+)-taxifolin and (2S)-naringenin to (+)-(2R/3R)-dihydrokaempferol in vitro.</text>
</comment>
<comment type="catalytic activity">
    <reaction evidence="3">
        <text>a (2S)-flavan-4-one + 2-oxoglutarate + O2 = a (2R,3R)-dihydroflavonol + succinate + CO2</text>
        <dbReference type="Rhea" id="RHEA:18621"/>
        <dbReference type="ChEBI" id="CHEBI:15379"/>
        <dbReference type="ChEBI" id="CHEBI:16526"/>
        <dbReference type="ChEBI" id="CHEBI:16810"/>
        <dbReference type="ChEBI" id="CHEBI:30031"/>
        <dbReference type="ChEBI" id="CHEBI:138188"/>
        <dbReference type="ChEBI" id="CHEBI:140377"/>
        <dbReference type="EC" id="1.14.11.9"/>
    </reaction>
</comment>
<comment type="cofactor">
    <cofactor evidence="2">
        <name>Fe(2+)</name>
        <dbReference type="ChEBI" id="CHEBI:29033"/>
    </cofactor>
    <text evidence="2">Binds 1 Fe(2+) ion per subunit.</text>
</comment>
<comment type="cofactor">
    <cofactor evidence="1">
        <name>L-ascorbate</name>
        <dbReference type="ChEBI" id="CHEBI:38290"/>
    </cofactor>
</comment>
<comment type="biophysicochemical properties">
    <kinetics>
        <KM evidence="3">5.7 uM for S-eriodictyol</KM>
        <Vmax evidence="3">0.4 umol/sec/mg enzyme toward S-eriodictyol</Vmax>
    </kinetics>
</comment>
<comment type="pathway">
    <text evidence="5">Secondary metabolite biosynthesis; flavonoid biosynthesis.</text>
</comment>
<comment type="alternative products">
    <event type="alternative splicing"/>
    <isoform>
        <id>Q8W2X5-1</id>
        <name>1</name>
        <sequence type="displayed"/>
    </isoform>
    <isoform>
        <id>Q8W2X5-2</id>
        <name>2</name>
        <sequence type="described" ref="VSP_058987 VSP_058988"/>
    </isoform>
</comment>
<comment type="tissue specificity">
    <text evidence="3">Expressed in roots, leaves and stems. Expressed at low levels in seeds.</text>
</comment>
<comment type="similarity">
    <text evidence="5">Belongs to the iron/ascorbate-dependent oxidoreductase family.</text>
</comment>
<dbReference type="EC" id="1.14.11.9" evidence="3"/>
<dbReference type="EMBL" id="AC092697">
    <property type="protein sequence ID" value="AAL58118.1"/>
    <property type="molecule type" value="Genomic_DNA"/>
</dbReference>
<dbReference type="EMBL" id="AC074196">
    <property type="protein sequence ID" value="AAM76343.1"/>
    <property type="molecule type" value="Genomic_DNA"/>
</dbReference>
<dbReference type="EMBL" id="DP000086">
    <property type="protein sequence ID" value="ABB47934.2"/>
    <property type="molecule type" value="Genomic_DNA"/>
</dbReference>
<dbReference type="EMBL" id="DP000086">
    <property type="protein sequence ID" value="ABG66222.1"/>
    <property type="molecule type" value="Genomic_DNA"/>
</dbReference>
<dbReference type="EMBL" id="AP008216">
    <property type="protein sequence ID" value="BAF27083.1"/>
    <property type="molecule type" value="Genomic_DNA"/>
</dbReference>
<dbReference type="EMBL" id="AP014966">
    <property type="protein sequence ID" value="BAT11823.1"/>
    <property type="molecule type" value="Genomic_DNA"/>
</dbReference>
<dbReference type="EMBL" id="AK061357">
    <property type="protein sequence ID" value="BAG87874.1"/>
    <property type="molecule type" value="mRNA"/>
</dbReference>
<dbReference type="RefSeq" id="XP_015614471.1">
    <molecule id="Q8W2X5-1"/>
    <property type="nucleotide sequence ID" value="XM_015758985.1"/>
</dbReference>
<dbReference type="SMR" id="Q8W2X5"/>
<dbReference type="FunCoup" id="Q8W2X5">
    <property type="interactions" value="41"/>
</dbReference>
<dbReference type="STRING" id="39947.Q8W2X5"/>
<dbReference type="PaxDb" id="39947-Q8W2X5"/>
<dbReference type="EnsemblPlants" id="Os10t0536400-02">
    <molecule id="Q8W2X5-1"/>
    <property type="protein sequence ID" value="Os10t0536400-02"/>
    <property type="gene ID" value="Os10g0536400"/>
</dbReference>
<dbReference type="Gramene" id="Os10t0536400-02">
    <molecule id="Q8W2X5-1"/>
    <property type="protein sequence ID" value="Os10t0536400-02"/>
    <property type="gene ID" value="Os10g0536400"/>
</dbReference>
<dbReference type="KEGG" id="dosa:Os10g0536400"/>
<dbReference type="KEGG" id="osa:4349238"/>
<dbReference type="eggNOG" id="KOG0143">
    <property type="taxonomic scope" value="Eukaryota"/>
</dbReference>
<dbReference type="InParanoid" id="Q8W2X5"/>
<dbReference type="OMA" id="QQIAGAC"/>
<dbReference type="OrthoDB" id="288590at2759"/>
<dbReference type="BRENDA" id="1.14.11.9">
    <property type="organism ID" value="4460"/>
</dbReference>
<dbReference type="UniPathway" id="UPA00154"/>
<dbReference type="Proteomes" id="UP000000763">
    <property type="component" value="Chromosome 10"/>
</dbReference>
<dbReference type="Proteomes" id="UP000059680">
    <property type="component" value="Chromosome 10"/>
</dbReference>
<dbReference type="GO" id="GO:0016706">
    <property type="term" value="F:2-oxoglutarate-dependent dioxygenase activity"/>
    <property type="evidence" value="ECO:0000318"/>
    <property type="project" value="GO_Central"/>
</dbReference>
<dbReference type="GO" id="GO:0045486">
    <property type="term" value="F:flavanone 3-dioxygenase activity"/>
    <property type="evidence" value="ECO:0007669"/>
    <property type="project" value="UniProtKB-EC"/>
</dbReference>
<dbReference type="GO" id="GO:0031418">
    <property type="term" value="F:L-ascorbic acid binding"/>
    <property type="evidence" value="ECO:0007669"/>
    <property type="project" value="UniProtKB-KW"/>
</dbReference>
<dbReference type="GO" id="GO:0046872">
    <property type="term" value="F:metal ion binding"/>
    <property type="evidence" value="ECO:0007669"/>
    <property type="project" value="UniProtKB-KW"/>
</dbReference>
<dbReference type="GO" id="GO:0009813">
    <property type="term" value="P:flavonoid biosynthetic process"/>
    <property type="evidence" value="ECO:0007669"/>
    <property type="project" value="UniProtKB-UniPathway"/>
</dbReference>
<dbReference type="FunFam" id="2.60.120.330:FF:000007">
    <property type="entry name" value="Protein DMR6-like oxygenase 2"/>
    <property type="match status" value="1"/>
</dbReference>
<dbReference type="Gene3D" id="2.60.120.330">
    <property type="entry name" value="B-lactam Antibiotic, Isopenicillin N Synthase, Chain"/>
    <property type="match status" value="1"/>
</dbReference>
<dbReference type="InterPro" id="IPR026992">
    <property type="entry name" value="DIOX_N"/>
</dbReference>
<dbReference type="InterPro" id="IPR044861">
    <property type="entry name" value="IPNS-like_FE2OG_OXY"/>
</dbReference>
<dbReference type="InterPro" id="IPR027443">
    <property type="entry name" value="IPNS-like_sf"/>
</dbReference>
<dbReference type="InterPro" id="IPR005123">
    <property type="entry name" value="Oxoglu/Fe-dep_dioxygenase_dom"/>
</dbReference>
<dbReference type="InterPro" id="IPR050295">
    <property type="entry name" value="Plant_2OG-oxidoreductases"/>
</dbReference>
<dbReference type="PANTHER" id="PTHR47991">
    <property type="entry name" value="OXOGLUTARATE/IRON-DEPENDENT DIOXYGENASE"/>
    <property type="match status" value="1"/>
</dbReference>
<dbReference type="Pfam" id="PF03171">
    <property type="entry name" value="2OG-FeII_Oxy"/>
    <property type="match status" value="1"/>
</dbReference>
<dbReference type="Pfam" id="PF14226">
    <property type="entry name" value="DIOX_N"/>
    <property type="match status" value="1"/>
</dbReference>
<dbReference type="SUPFAM" id="SSF51197">
    <property type="entry name" value="Clavaminate synthase-like"/>
    <property type="match status" value="1"/>
</dbReference>
<dbReference type="PROSITE" id="PS51471">
    <property type="entry name" value="FE2OG_OXY"/>
    <property type="match status" value="1"/>
</dbReference>
<organism>
    <name type="scientific">Oryza sativa subsp. japonica</name>
    <name type="common">Rice</name>
    <dbReference type="NCBI Taxonomy" id="39947"/>
    <lineage>
        <taxon>Eukaryota</taxon>
        <taxon>Viridiplantae</taxon>
        <taxon>Streptophyta</taxon>
        <taxon>Embryophyta</taxon>
        <taxon>Tracheophyta</taxon>
        <taxon>Spermatophyta</taxon>
        <taxon>Magnoliopsida</taxon>
        <taxon>Liliopsida</taxon>
        <taxon>Poales</taxon>
        <taxon>Poaceae</taxon>
        <taxon>BOP clade</taxon>
        <taxon>Oryzoideae</taxon>
        <taxon>Oryzeae</taxon>
        <taxon>Oryzinae</taxon>
        <taxon>Oryza</taxon>
        <taxon>Oryza sativa</taxon>
    </lineage>
</organism>
<accession>Q8W2X5</accession>
<accession>Q109B6</accession>
<accession>Q336X1</accession>
<feature type="chain" id="PRO_0000440773" description="Flavanone 3-dioxygenase 2">
    <location>
        <begin position="1"/>
        <end position="342"/>
    </location>
</feature>
<feature type="domain" description="Fe2OG dioxygenase" evidence="2">
    <location>
        <begin position="193"/>
        <end position="293"/>
    </location>
</feature>
<feature type="binding site" evidence="2">
    <location>
        <position position="217"/>
    </location>
    <ligand>
        <name>Fe cation</name>
        <dbReference type="ChEBI" id="CHEBI:24875"/>
    </ligand>
</feature>
<feature type="binding site" evidence="2">
    <location>
        <position position="219"/>
    </location>
    <ligand>
        <name>Fe cation</name>
        <dbReference type="ChEBI" id="CHEBI:24875"/>
    </ligand>
</feature>
<feature type="binding site" evidence="2">
    <location>
        <position position="274"/>
    </location>
    <ligand>
        <name>Fe cation</name>
        <dbReference type="ChEBI" id="CHEBI:24875"/>
    </ligand>
</feature>
<feature type="binding site" evidence="2">
    <location>
        <position position="284"/>
    </location>
    <ligand>
        <name>2-oxoglutarate</name>
        <dbReference type="ChEBI" id="CHEBI:16810"/>
    </ligand>
</feature>
<feature type="splice variant" id="VSP_058987" description="In isoform 2.">
    <original>AISES</original>
    <variation>STLKP</variation>
    <location>
        <begin position="174"/>
        <end position="178"/>
    </location>
</feature>
<feature type="splice variant" id="VSP_058988" description="In isoform 2.">
    <location>
        <begin position="179"/>
        <end position="342"/>
    </location>
</feature>
<reference key="1">
    <citation type="journal article" date="2003" name="Science">
        <title>In-depth view of structure, activity, and evolution of rice chromosome 10.</title>
        <authorList>
            <person name="Yu Y."/>
            <person name="Rambo T."/>
            <person name="Currie J."/>
            <person name="Saski C."/>
            <person name="Kim H.-R."/>
            <person name="Collura K."/>
            <person name="Thompson S."/>
            <person name="Simmons J."/>
            <person name="Yang T.-J."/>
            <person name="Nah G."/>
            <person name="Patel A.J."/>
            <person name="Thurmond S."/>
            <person name="Henry D."/>
            <person name="Oates R."/>
            <person name="Palmer M."/>
            <person name="Pries G."/>
            <person name="Gibson J."/>
            <person name="Anderson H."/>
            <person name="Paradkar M."/>
            <person name="Crane L."/>
            <person name="Dale J."/>
            <person name="Carver M.B."/>
            <person name="Wood T."/>
            <person name="Frisch D."/>
            <person name="Engler F."/>
            <person name="Soderlund C."/>
            <person name="Palmer L.E."/>
            <person name="Teytelman L."/>
            <person name="Nascimento L."/>
            <person name="De la Bastide M."/>
            <person name="Spiegel L."/>
            <person name="Ware D."/>
            <person name="O'Shaughnessy A."/>
            <person name="Dike S."/>
            <person name="Dedhia N."/>
            <person name="Preston R."/>
            <person name="Huang E."/>
            <person name="Ferraro K."/>
            <person name="Kuit K."/>
            <person name="Miller B."/>
            <person name="Zutavern T."/>
            <person name="Katzenberger F."/>
            <person name="Muller S."/>
            <person name="Balija V."/>
            <person name="Martienssen R.A."/>
            <person name="Stein L."/>
            <person name="Minx P."/>
            <person name="Johnson D."/>
            <person name="Cordum H."/>
            <person name="Mardis E."/>
            <person name="Cheng Z."/>
            <person name="Jiang J."/>
            <person name="Wilson R."/>
            <person name="McCombie W.R."/>
            <person name="Wing R.A."/>
            <person name="Yuan Q."/>
            <person name="Ouyang S."/>
            <person name="Liu J."/>
            <person name="Jones K.M."/>
            <person name="Gansberger K."/>
            <person name="Moffat K."/>
            <person name="Hill J."/>
            <person name="Tsitrin T."/>
            <person name="Overton L."/>
            <person name="Bera J."/>
            <person name="Kim M."/>
            <person name="Jin S."/>
            <person name="Tallon L."/>
            <person name="Ciecko A."/>
            <person name="Pai G."/>
            <person name="Van Aken S."/>
            <person name="Utterback T."/>
            <person name="Reidmuller S."/>
            <person name="Bormann J."/>
            <person name="Feldblyum T."/>
            <person name="Hsiao J."/>
            <person name="Zismann V."/>
            <person name="Blunt S."/>
            <person name="de Vazeille A.R."/>
            <person name="Shaffer T."/>
            <person name="Koo H."/>
            <person name="Suh B."/>
            <person name="Yang Q."/>
            <person name="Haas B."/>
            <person name="Peterson J."/>
            <person name="Pertea M."/>
            <person name="Volfovsky N."/>
            <person name="Wortman J."/>
            <person name="White O."/>
            <person name="Salzberg S.L."/>
            <person name="Fraser C.M."/>
            <person name="Buell C.R."/>
            <person name="Messing J."/>
            <person name="Song R."/>
            <person name="Fuks G."/>
            <person name="Llaca V."/>
            <person name="Kovchak S."/>
            <person name="Young S."/>
            <person name="Bowers J.E."/>
            <person name="Paterson A.H."/>
            <person name="Johns M.A."/>
            <person name="Mao L."/>
            <person name="Pan H."/>
            <person name="Dean R.A."/>
        </authorList>
    </citation>
    <scope>NUCLEOTIDE SEQUENCE [LARGE SCALE GENOMIC DNA]</scope>
    <source>
        <strain>cv. Nipponbare</strain>
    </source>
</reference>
<reference key="2">
    <citation type="journal article" date="2005" name="Nature">
        <title>The map-based sequence of the rice genome.</title>
        <authorList>
            <consortium name="International rice genome sequencing project (IRGSP)"/>
        </authorList>
    </citation>
    <scope>NUCLEOTIDE SEQUENCE [LARGE SCALE GENOMIC DNA]</scope>
    <source>
        <strain>cv. Nipponbare</strain>
    </source>
</reference>
<reference key="3">
    <citation type="journal article" date="2008" name="Nucleic Acids Res.">
        <title>The rice annotation project database (RAP-DB): 2008 update.</title>
        <authorList>
            <consortium name="The rice annotation project (RAP)"/>
        </authorList>
    </citation>
    <scope>GENOME REANNOTATION</scope>
    <source>
        <strain>cv. Nipponbare</strain>
    </source>
</reference>
<reference key="4">
    <citation type="journal article" date="2013" name="Rice">
        <title>Improvement of the Oryza sativa Nipponbare reference genome using next generation sequence and optical map data.</title>
        <authorList>
            <person name="Kawahara Y."/>
            <person name="de la Bastide M."/>
            <person name="Hamilton J.P."/>
            <person name="Kanamori H."/>
            <person name="McCombie W.R."/>
            <person name="Ouyang S."/>
            <person name="Schwartz D.C."/>
            <person name="Tanaka T."/>
            <person name="Wu J."/>
            <person name="Zhou S."/>
            <person name="Childs K.L."/>
            <person name="Davidson R.M."/>
            <person name="Lin H."/>
            <person name="Quesada-Ocampo L."/>
            <person name="Vaillancourt B."/>
            <person name="Sakai H."/>
            <person name="Lee S.S."/>
            <person name="Kim J."/>
            <person name="Numa H."/>
            <person name="Itoh T."/>
            <person name="Buell C.R."/>
            <person name="Matsumoto T."/>
        </authorList>
    </citation>
    <scope>GENOME REANNOTATION</scope>
    <source>
        <strain>cv. Nipponbare</strain>
    </source>
</reference>
<reference key="5">
    <citation type="journal article" date="2003" name="Science">
        <title>Collection, mapping, and annotation of over 28,000 cDNA clones from japonica rice.</title>
        <authorList>
            <consortium name="The rice full-length cDNA consortium"/>
        </authorList>
    </citation>
    <scope>NUCLEOTIDE SEQUENCE [LARGE SCALE MRNA] (ISOFORM 2)</scope>
    <source>
        <strain>cv. Nipponbare</strain>
    </source>
</reference>
<reference key="6">
    <citation type="journal article" date="2008" name="Mol. Cells">
        <title>Flavanone 3beta-hydroxylases from rice: key enzymes for favonol and anthocyanin biosynthesis.</title>
        <authorList>
            <person name="Kim J.H."/>
            <person name="Lee Y.J."/>
            <person name="Kim B.G."/>
            <person name="Lim Y."/>
            <person name="Ahn J.H."/>
        </authorList>
    </citation>
    <scope>FUNCTION</scope>
    <scope>CATALYTIC ACTIVITY</scope>
    <scope>BIOPHYSICOCHEMICAL PROPERTIES</scope>
    <scope>TISSUE SPECIFICITY</scope>
</reference>
<protein>
    <recommendedName>
        <fullName evidence="5">Flavanone 3-dioxygenase 2</fullName>
        <ecNumber evidence="3">1.14.11.9</ecNumber>
    </recommendedName>
    <alternativeName>
        <fullName evidence="5">Flavanone 3-beta-hydroxylase 2</fullName>
    </alternativeName>
    <alternativeName>
        <fullName evidence="4">Flavanone 3-hydroxylase 2</fullName>
        <shortName evidence="4">OsF3H-2</shortName>
    </alternativeName>
</protein>
<sequence length="342" mass="38731">MAAEAEQQHQLLSTAVHDTMPGKYVRPESQRPRLDLVVSDARIPVVDLASPDRAAVVSAVGDACRTHGFFQVVNHGIDAALIASVMEVGREFFRLPAEEKAKLYSDDPAKKIRLSTSFNVRKETVHNWRDYLRLHCYPLHQFVPDWPSNPPSFKEIIGTYCTEVRELGFRLYEAISESLGLEGGYMRETLGEQEQHMAVNYYPQCPEPELTYGLPAHTDPNALTILLMDDQVAGLQVLNDGKWIAVNPQPGALVINIGDQLQALSNGKYRSVWHRAVVNSDRERMSVASFLCPCNSVELGPAKKLITDDSPAVYRNYTYDEYYKKFWSRNLDQEHCLELFRT</sequence>
<keyword id="KW-0025">Alternative splicing</keyword>
<keyword id="KW-0223">Dioxygenase</keyword>
<keyword id="KW-0284">Flavonoid biosynthesis</keyword>
<keyword id="KW-0408">Iron</keyword>
<keyword id="KW-0479">Metal-binding</keyword>
<keyword id="KW-0560">Oxidoreductase</keyword>
<keyword id="KW-1185">Reference proteome</keyword>
<keyword id="KW-0847">Vitamin C</keyword>
<evidence type="ECO:0000250" key="1"/>
<evidence type="ECO:0000255" key="2">
    <source>
        <dbReference type="PROSITE-ProRule" id="PRU00805"/>
    </source>
</evidence>
<evidence type="ECO:0000269" key="3">
    <source>
    </source>
</evidence>
<evidence type="ECO:0000303" key="4">
    <source>
    </source>
</evidence>
<evidence type="ECO:0000305" key="5"/>
<evidence type="ECO:0000312" key="6">
    <source>
        <dbReference type="EMBL" id="AAL58118.1"/>
    </source>
</evidence>
<evidence type="ECO:0000312" key="7">
    <source>
        <dbReference type="EMBL" id="AAM76343.1"/>
    </source>
</evidence>
<evidence type="ECO:0000312" key="8">
    <source>
        <dbReference type="EMBL" id="ABB47934.2"/>
    </source>
</evidence>
<evidence type="ECO:0000312" key="9">
    <source>
        <dbReference type="EMBL" id="BAF27083.1"/>
    </source>
</evidence>
<gene>
    <name evidence="4" type="primary">F3H-2</name>
    <name evidence="9" type="ordered locus">Os10g0536400</name>
    <name evidence="8" type="ordered locus">LOC_Os10g39140</name>
    <name evidence="7" type="ORF">OSJNBa0040D23.1</name>
    <name evidence="6" type="ORF">OSJNBb0060I05.4</name>
</gene>